<gene>
    <name type="primary">nad4L</name>
    <name type="ORF">DDB_G0294024</name>
</gene>
<accession>Q9XK79</accession>
<organism>
    <name type="scientific">Dictyostelium discoideum</name>
    <name type="common">Social amoeba</name>
    <dbReference type="NCBI Taxonomy" id="44689"/>
    <lineage>
        <taxon>Eukaryota</taxon>
        <taxon>Amoebozoa</taxon>
        <taxon>Evosea</taxon>
        <taxon>Eumycetozoa</taxon>
        <taxon>Dictyostelia</taxon>
        <taxon>Dictyosteliales</taxon>
        <taxon>Dictyosteliaceae</taxon>
        <taxon>Dictyostelium</taxon>
    </lineage>
</organism>
<keyword id="KW-0249">Electron transport</keyword>
<keyword id="KW-0472">Membrane</keyword>
<keyword id="KW-0496">Mitochondrion</keyword>
<keyword id="KW-0520">NAD</keyword>
<keyword id="KW-1185">Reference proteome</keyword>
<keyword id="KW-0679">Respiratory chain</keyword>
<keyword id="KW-1278">Translocase</keyword>
<keyword id="KW-0812">Transmembrane</keyword>
<keyword id="KW-1133">Transmembrane helix</keyword>
<keyword id="KW-0813">Transport</keyword>
<keyword id="KW-0830">Ubiquinone</keyword>
<reference key="1">
    <citation type="submission" date="1999-06" db="EMBL/GenBank/DDBJ databases">
        <title>The Dictyostelium genome project: complete annotation of the mitochondrial DNA.</title>
        <authorList>
            <person name="Sucgang R."/>
            <person name="Muzny D."/>
            <person name="Gibbs R."/>
            <person name="Kuspa A."/>
        </authorList>
    </citation>
    <scope>NUCLEOTIDE SEQUENCE [GENOMIC DNA]</scope>
    <source>
        <strain>AX4</strain>
    </source>
</reference>
<reference key="2">
    <citation type="journal article" date="2000" name="Mol. Gen. Genet.">
        <title>The mitochondrial DNA of Dictyostelium discoideum: complete sequence, gene content and genome organization.</title>
        <authorList>
            <person name="Ogawa S."/>
            <person name="Yoshino R."/>
            <person name="Angata K."/>
            <person name="Iwamoto M."/>
            <person name="Pi M."/>
            <person name="Kuroe K."/>
            <person name="Matsuo K."/>
            <person name="Morio T."/>
            <person name="Urushihara H."/>
            <person name="Yanagisawa K."/>
            <person name="Tanaka Y."/>
        </authorList>
    </citation>
    <scope>NUCLEOTIDE SEQUENCE [LARGE SCALE GENOMIC DNA]</scope>
    <source>
        <strain>AX3</strain>
    </source>
</reference>
<dbReference type="EC" id="7.1.1.2"/>
<dbReference type="EMBL" id="AF155828">
    <property type="protein sequence ID" value="AAD43331.1"/>
    <property type="molecule type" value="Genomic_DNA"/>
</dbReference>
<dbReference type="EMBL" id="AB000109">
    <property type="protein sequence ID" value="BAA78090.1"/>
    <property type="molecule type" value="Genomic_DNA"/>
</dbReference>
<dbReference type="PIR" id="T43787">
    <property type="entry name" value="T43787"/>
</dbReference>
<dbReference type="RefSeq" id="NP_050108.1">
    <property type="nucleotide sequence ID" value="NC_000895.1"/>
</dbReference>
<dbReference type="SMR" id="Q9XK79"/>
<dbReference type="FunCoup" id="Q9XK79">
    <property type="interactions" value="17"/>
</dbReference>
<dbReference type="STRING" id="44689.Q9XK79"/>
<dbReference type="GeneID" id="2193935"/>
<dbReference type="KEGG" id="ddi:DidioMp41"/>
<dbReference type="dictyBase" id="DDB_G0294024">
    <property type="gene designation" value="nad4L"/>
</dbReference>
<dbReference type="VEuPathDB" id="AmoebaDB:DidioMp41"/>
<dbReference type="InParanoid" id="Q9XK79"/>
<dbReference type="PRO" id="PR:Q9XK79"/>
<dbReference type="Proteomes" id="UP000002195">
    <property type="component" value="Mitochondrion"/>
</dbReference>
<dbReference type="GO" id="GO:0031966">
    <property type="term" value="C:mitochondrial membrane"/>
    <property type="evidence" value="ECO:0007669"/>
    <property type="project" value="UniProtKB-SubCell"/>
</dbReference>
<dbReference type="GO" id="GO:0045271">
    <property type="term" value="C:respiratory chain complex I"/>
    <property type="evidence" value="ECO:0000318"/>
    <property type="project" value="GO_Central"/>
</dbReference>
<dbReference type="GO" id="GO:0008137">
    <property type="term" value="F:NADH dehydrogenase (ubiquinone) activity"/>
    <property type="evidence" value="ECO:0007669"/>
    <property type="project" value="UniProtKB-EC"/>
</dbReference>
<dbReference type="GO" id="GO:0042773">
    <property type="term" value="P:ATP synthesis coupled electron transport"/>
    <property type="evidence" value="ECO:0007669"/>
    <property type="project" value="InterPro"/>
</dbReference>
<dbReference type="FunFam" id="1.10.287.3510:FF:000014">
    <property type="entry name" value="NADH-ubiquinone oxidoreductase chain 4L"/>
    <property type="match status" value="1"/>
</dbReference>
<dbReference type="Gene3D" id="1.10.287.3510">
    <property type="match status" value="1"/>
</dbReference>
<dbReference type="InterPro" id="IPR001133">
    <property type="entry name" value="NADH_UbQ_OxRdtase_chain4L/K"/>
</dbReference>
<dbReference type="InterPro" id="IPR039428">
    <property type="entry name" value="NUOK/Mnh_C1-like"/>
</dbReference>
<dbReference type="PANTHER" id="PTHR11434:SF16">
    <property type="entry name" value="NADH-UBIQUINONE OXIDOREDUCTASE CHAIN 4L"/>
    <property type="match status" value="1"/>
</dbReference>
<dbReference type="PANTHER" id="PTHR11434">
    <property type="entry name" value="NADH-UBIQUINONE OXIDOREDUCTASE SUBUNIT ND4L"/>
    <property type="match status" value="1"/>
</dbReference>
<dbReference type="Pfam" id="PF00420">
    <property type="entry name" value="Oxidored_q2"/>
    <property type="match status" value="1"/>
</dbReference>
<evidence type="ECO:0000250" key="1"/>
<evidence type="ECO:0000255" key="2"/>
<evidence type="ECO:0000305" key="3"/>
<proteinExistence type="inferred from homology"/>
<comment type="function">
    <text evidence="1">Core subunit of the mitochondrial membrane respiratory chain NADH dehydrogenase (Complex I) that is believed to belong to the minimal assembly required for catalysis. Complex I functions in the transfer of electrons from NADH to the respiratory chain. The immediate electron acceptor for the enzyme is believed to be ubiquinone (By similarity).</text>
</comment>
<comment type="catalytic activity">
    <reaction>
        <text>a ubiquinone + NADH + 5 H(+)(in) = a ubiquinol + NAD(+) + 4 H(+)(out)</text>
        <dbReference type="Rhea" id="RHEA:29091"/>
        <dbReference type="Rhea" id="RHEA-COMP:9565"/>
        <dbReference type="Rhea" id="RHEA-COMP:9566"/>
        <dbReference type="ChEBI" id="CHEBI:15378"/>
        <dbReference type="ChEBI" id="CHEBI:16389"/>
        <dbReference type="ChEBI" id="CHEBI:17976"/>
        <dbReference type="ChEBI" id="CHEBI:57540"/>
        <dbReference type="ChEBI" id="CHEBI:57945"/>
        <dbReference type="EC" id="7.1.1.2"/>
    </reaction>
</comment>
<comment type="subcellular location">
    <subcellularLocation>
        <location evidence="1">Mitochondrion membrane</location>
        <topology evidence="1">Multi-pass membrane protein</topology>
    </subcellularLocation>
</comment>
<comment type="similarity">
    <text evidence="3">Belongs to the complex I subunit 4L family.</text>
</comment>
<geneLocation type="mitochondrion"/>
<protein>
    <recommendedName>
        <fullName>NADH-ubiquinone oxidoreductase chain 4L</fullName>
        <ecNumber>7.1.1.2</ecNumber>
    </recommendedName>
    <alternativeName>
        <fullName>NADH dehydrogenase subunit 4L</fullName>
    </alternativeName>
</protein>
<feature type="chain" id="PRO_0000311826" description="NADH-ubiquinone oxidoreductase chain 4L">
    <location>
        <begin position="1"/>
        <end position="98"/>
    </location>
</feature>
<feature type="transmembrane region" description="Helical" evidence="2">
    <location>
        <begin position="1"/>
        <end position="21"/>
    </location>
</feature>
<feature type="transmembrane region" description="Helical" evidence="2">
    <location>
        <begin position="26"/>
        <end position="46"/>
    </location>
</feature>
<feature type="transmembrane region" description="Helical" evidence="2">
    <location>
        <begin position="61"/>
        <end position="81"/>
    </location>
</feature>
<sequence length="98" mass="10567">MNLIDLILIAIYVIGISGLIFNKNNIINILIISELNLGTLGMLFVLASVELNDILGELSGLYILTFTAAESAIGLAIVVILYSKTGIINIRHLNKLKG</sequence>
<name>NU4LM_DICDI</name>